<dbReference type="EC" id="1.1.1.438" evidence="2"/>
<dbReference type="EMBL" id="AP024525">
    <property type="protein sequence ID" value="BCT75147.1"/>
    <property type="molecule type" value="Genomic_DNA"/>
</dbReference>
<dbReference type="RefSeq" id="WP_229231917.1">
    <property type="nucleotide sequence ID" value="NZ_AP024525.1"/>
</dbReference>
<dbReference type="SMR" id="P0DXE1"/>
<dbReference type="KEGG" id="ccyc:SCMU_09890"/>
<dbReference type="GO" id="GO:0016491">
    <property type="term" value="F:oxidoreductase activity"/>
    <property type="evidence" value="ECO:0007669"/>
    <property type="project" value="UniProtKB-KW"/>
</dbReference>
<dbReference type="FunFam" id="3.40.50.720:FF:000084">
    <property type="entry name" value="Short-chain dehydrogenase reductase"/>
    <property type="match status" value="1"/>
</dbReference>
<dbReference type="Gene3D" id="3.40.50.720">
    <property type="entry name" value="NAD(P)-binding Rossmann-like Domain"/>
    <property type="match status" value="1"/>
</dbReference>
<dbReference type="InterPro" id="IPR036291">
    <property type="entry name" value="NAD(P)-bd_dom_sf"/>
</dbReference>
<dbReference type="InterPro" id="IPR020904">
    <property type="entry name" value="Sc_DH/Rdtase_CS"/>
</dbReference>
<dbReference type="InterPro" id="IPR002347">
    <property type="entry name" value="SDR_fam"/>
</dbReference>
<dbReference type="NCBIfam" id="NF005559">
    <property type="entry name" value="PRK07231.1"/>
    <property type="match status" value="1"/>
</dbReference>
<dbReference type="NCBIfam" id="NF009466">
    <property type="entry name" value="PRK12826.1-2"/>
    <property type="match status" value="1"/>
</dbReference>
<dbReference type="PANTHER" id="PTHR24321">
    <property type="entry name" value="DEHYDROGENASES, SHORT CHAIN"/>
    <property type="match status" value="1"/>
</dbReference>
<dbReference type="PANTHER" id="PTHR24321:SF8">
    <property type="entry name" value="ESTRADIOL 17-BETA-DEHYDROGENASE 8-RELATED"/>
    <property type="match status" value="1"/>
</dbReference>
<dbReference type="Pfam" id="PF13561">
    <property type="entry name" value="adh_short_C2"/>
    <property type="match status" value="1"/>
</dbReference>
<dbReference type="PRINTS" id="PR00081">
    <property type="entry name" value="GDHRDH"/>
</dbReference>
<dbReference type="PRINTS" id="PR00080">
    <property type="entry name" value="SDRFAMILY"/>
</dbReference>
<dbReference type="SUPFAM" id="SSF51735">
    <property type="entry name" value="NAD(P)-binding Rossmann-fold domains"/>
    <property type="match status" value="1"/>
</dbReference>
<dbReference type="PROSITE" id="PS00061">
    <property type="entry name" value="ADH_SHORT"/>
    <property type="match status" value="1"/>
</dbReference>
<accession>P0DXE1</accession>
<feature type="chain" id="PRO_0000460809" description="Cis-4-hydroxycyclohexanecarboxylate dehydrogenase">
    <location>
        <begin position="1"/>
        <end position="249"/>
    </location>
</feature>
<feature type="active site" description="Proton acceptor" evidence="1">
    <location>
        <position position="156"/>
    </location>
</feature>
<feature type="binding site" evidence="1">
    <location>
        <position position="38"/>
    </location>
    <ligand>
        <name>NAD(+)</name>
        <dbReference type="ChEBI" id="CHEBI:57540"/>
    </ligand>
</feature>
<feature type="binding site" evidence="1">
    <location>
        <position position="63"/>
    </location>
    <ligand>
        <name>NAD(+)</name>
        <dbReference type="ChEBI" id="CHEBI:57540"/>
    </ligand>
</feature>
<feature type="binding site" evidence="1">
    <location>
        <position position="64"/>
    </location>
    <ligand>
        <name>NAD(+)</name>
        <dbReference type="ChEBI" id="CHEBI:57540"/>
    </ligand>
</feature>
<feature type="binding site" evidence="1">
    <location>
        <position position="90"/>
    </location>
    <ligand>
        <name>NAD(+)</name>
        <dbReference type="ChEBI" id="CHEBI:57540"/>
    </ligand>
</feature>
<feature type="binding site" evidence="1">
    <location>
        <position position="156"/>
    </location>
    <ligand>
        <name>NAD(+)</name>
        <dbReference type="ChEBI" id="CHEBI:57540"/>
    </ligand>
</feature>
<feature type="binding site" evidence="1">
    <location>
        <position position="160"/>
    </location>
    <ligand>
        <name>NAD(+)</name>
        <dbReference type="ChEBI" id="CHEBI:57540"/>
    </ligand>
</feature>
<feature type="binding site" evidence="1">
    <location>
        <position position="189"/>
    </location>
    <ligand>
        <name>NAD(+)</name>
        <dbReference type="ChEBI" id="CHEBI:57540"/>
    </ligand>
</feature>
<feature type="binding site" evidence="1">
    <location>
        <position position="191"/>
    </location>
    <ligand>
        <name>NAD(+)</name>
        <dbReference type="ChEBI" id="CHEBI:57540"/>
    </ligand>
</feature>
<reference key="1">
    <citation type="journal article" date="2021" name="J. Biosci. Bioeng.">
        <title>Identification and characterization of a chc gene cluster responsible for the aromatization pathway of cyclohexanecarboxylate degradation in Sinomonas cyclohexanicum ATCC 51369.</title>
        <authorList>
            <person name="Yamamoto T."/>
            <person name="Hasegawa Y."/>
            <person name="Lau P.C.K."/>
            <person name="Iwaki H."/>
        </authorList>
    </citation>
    <scope>NUCLEOTIDE SEQUENCE [LARGE SCALE GENOMIC DNA]</scope>
    <scope>FUNCTION</scope>
    <scope>CATALYTIC ACTIVITY</scope>
    <scope>SUBUNIT</scope>
    <scope>INDUCTION</scope>
    <source>
        <strain>ATCC 51369 / MU</strain>
    </source>
</reference>
<sequence>MGEAFAERVAVVTGAASGIGAATARLLAERGAAVVIGDVAEGADDVARALRDAGHRALWVRTDVTDEDSVAALMDRAAAEFGSLDVLVANAGIAEPKAPLHELDVAAWRRVIEIDLTGVALCGKHALRHMSAAGSGAIVNVSSILGAVGQANSSSYSAAKAGVANLTRSAAVTYAASGIRVNAVAPGYADTPLVAGLPADVRATMAARQPIGRLARPEEVAEAIAFLASDAASFVVGAILAVDGGYTAV</sequence>
<comment type="function">
    <text evidence="2">Dehydrogenase involved in a cyclohexanecarboxylate (CHCA) degradation pathway (PubMed:34583900). Catalyzes the NAD(+)-dependent dehydrogenation of cis-4-hydroxycyclohexanecarboxylate (cis-4-hydroxyCHCA) to form 4-oxocyclohexanecarboxylate (4-oxoCHCA) (PubMed:34583900). Is highly specific for the cis-4-hydroxy derivative and shows only weak activity with trans-4-hydroxyCHCA (PubMed:34583900). Cannot use NADP(+) (PubMed:34583900).</text>
</comment>
<comment type="catalytic activity">
    <reaction evidence="2">
        <text>cis-4-hydroxycyclohexane-1-carboxylate + NAD(+) = 4-oxocyclohexane-1-carboxylate + NADH + H(+)</text>
        <dbReference type="Rhea" id="RHEA:79147"/>
        <dbReference type="ChEBI" id="CHEBI:15378"/>
        <dbReference type="ChEBI" id="CHEBI:15777"/>
        <dbReference type="ChEBI" id="CHEBI:57540"/>
        <dbReference type="ChEBI" id="CHEBI:57945"/>
        <dbReference type="ChEBI" id="CHEBI:229701"/>
        <dbReference type="EC" id="1.1.1.438"/>
    </reaction>
    <physiologicalReaction direction="left-to-right" evidence="2">
        <dbReference type="Rhea" id="RHEA:79148"/>
    </physiologicalReaction>
</comment>
<comment type="subunit">
    <text evidence="2">Homotetramer.</text>
</comment>
<comment type="induction">
    <text evidence="2">Induced by CHCA, trans-4-hydroxyCHCA and 4-oxoCHCA but not by 4-hydroxybenzoate (4-HBA).</text>
</comment>
<comment type="similarity">
    <text evidence="4">Belongs to the short-chain dehydrogenases/reductases (SDR) family.</text>
</comment>
<organism>
    <name type="scientific">Sinomonas cyclohexanicum</name>
    <name type="common">Corynebacterium cyclohexanicum</name>
    <dbReference type="NCBI Taxonomy" id="322009"/>
    <lineage>
        <taxon>Bacteria</taxon>
        <taxon>Bacillati</taxon>
        <taxon>Actinomycetota</taxon>
        <taxon>Actinomycetes</taxon>
        <taxon>Micrococcales</taxon>
        <taxon>Micrococcaceae</taxon>
        <taxon>Sinomonas</taxon>
    </lineage>
</organism>
<gene>
    <name evidence="3" type="primary">chcB2</name>
    <name evidence="5" type="ORF">SCMU_09890</name>
</gene>
<protein>
    <recommendedName>
        <fullName evidence="3">Cis-4-hydroxycyclohexanecarboxylate dehydrogenase</fullName>
        <shortName evidence="3">Cis-4-hydroxyCHCA dehydrogenase</shortName>
        <ecNumber evidence="2">1.1.1.438</ecNumber>
    </recommendedName>
</protein>
<evidence type="ECO:0000250" key="1">
    <source>
        <dbReference type="UniProtKB" id="P9WGT1"/>
    </source>
</evidence>
<evidence type="ECO:0000269" key="2">
    <source>
    </source>
</evidence>
<evidence type="ECO:0000303" key="3">
    <source>
    </source>
</evidence>
<evidence type="ECO:0000305" key="4"/>
<evidence type="ECO:0000312" key="5">
    <source>
        <dbReference type="EMBL" id="BCT75147.1"/>
    </source>
</evidence>
<name>CHCB2_SINCY</name>
<keyword id="KW-0520">NAD</keyword>
<keyword id="KW-0560">Oxidoreductase</keyword>
<proteinExistence type="evidence at protein level"/>